<protein>
    <recommendedName>
        <fullName evidence="1">Ribosomal RNA small subunit methyltransferase G</fullName>
        <ecNumber evidence="1">2.1.1.170</ecNumber>
    </recommendedName>
    <alternativeName>
        <fullName evidence="1">16S rRNA 7-methylguanosine methyltransferase</fullName>
        <shortName evidence="1">16S rRNA m7G methyltransferase</shortName>
    </alternativeName>
</protein>
<evidence type="ECO:0000255" key="1">
    <source>
        <dbReference type="HAMAP-Rule" id="MF_00074"/>
    </source>
</evidence>
<gene>
    <name evidence="1" type="primary">rsmG</name>
    <name type="ordered locus">JJD26997_0792</name>
</gene>
<proteinExistence type="inferred from homology"/>
<sequence>MIFKDYDFLQNYDLKNFGEKVKIYKELLSKFNRIHNLTHLKNIDENIFDSIKILDFYDFSKAKNIADIGSGAGFPAVFLAFLLQSNFHLFEPNPKKTAFLRTLKIECELSNLHIYKEKVQEYKNTFKADIITSRALMDIKPLLEICTNLKDENTVFILWKGSEIYQELENIKDYEIFENNLRKYCIVK</sequence>
<name>RSMG_CAMJD</name>
<feature type="chain" id="PRO_1000010129" description="Ribosomal RNA small subunit methyltransferase G">
    <location>
        <begin position="1"/>
        <end position="188"/>
    </location>
</feature>
<feature type="binding site" evidence="1">
    <location>
        <position position="69"/>
    </location>
    <ligand>
        <name>S-adenosyl-L-methionine</name>
        <dbReference type="ChEBI" id="CHEBI:59789"/>
    </ligand>
</feature>
<feature type="binding site" evidence="1">
    <location>
        <position position="74"/>
    </location>
    <ligand>
        <name>S-adenosyl-L-methionine</name>
        <dbReference type="ChEBI" id="CHEBI:59789"/>
    </ligand>
</feature>
<feature type="binding site" evidence="1">
    <location>
        <begin position="119"/>
        <end position="120"/>
    </location>
    <ligand>
        <name>S-adenosyl-L-methionine</name>
        <dbReference type="ChEBI" id="CHEBI:59789"/>
    </ligand>
</feature>
<feature type="binding site" evidence="1">
    <location>
        <position position="134"/>
    </location>
    <ligand>
        <name>S-adenosyl-L-methionine</name>
        <dbReference type="ChEBI" id="CHEBI:59789"/>
    </ligand>
</feature>
<organism>
    <name type="scientific">Campylobacter jejuni subsp. doylei (strain ATCC BAA-1458 / RM4099 / 269.97)</name>
    <dbReference type="NCBI Taxonomy" id="360109"/>
    <lineage>
        <taxon>Bacteria</taxon>
        <taxon>Pseudomonadati</taxon>
        <taxon>Campylobacterota</taxon>
        <taxon>Epsilonproteobacteria</taxon>
        <taxon>Campylobacterales</taxon>
        <taxon>Campylobacteraceae</taxon>
        <taxon>Campylobacter</taxon>
    </lineage>
</organism>
<reference key="1">
    <citation type="submission" date="2007-07" db="EMBL/GenBank/DDBJ databases">
        <title>Complete genome sequence of Campylobacter jejuni subsp doylei 269.97 isolated from human blood.</title>
        <authorList>
            <person name="Fouts D.E."/>
            <person name="Mongodin E.F."/>
            <person name="Puiu D."/>
            <person name="Sebastian Y."/>
            <person name="Miller W.G."/>
            <person name="Mandrell R.E."/>
            <person name="Lastovica A.J."/>
            <person name="Nelson K.E."/>
        </authorList>
    </citation>
    <scope>NUCLEOTIDE SEQUENCE [LARGE SCALE GENOMIC DNA]</scope>
    <source>
        <strain>ATCC BAA-1458 / RM4099 / 269.97</strain>
    </source>
</reference>
<keyword id="KW-0963">Cytoplasm</keyword>
<keyword id="KW-0489">Methyltransferase</keyword>
<keyword id="KW-0698">rRNA processing</keyword>
<keyword id="KW-0949">S-adenosyl-L-methionine</keyword>
<keyword id="KW-0808">Transferase</keyword>
<dbReference type="EC" id="2.1.1.170" evidence="1"/>
<dbReference type="EMBL" id="CP000768">
    <property type="protein sequence ID" value="ABS44287.1"/>
    <property type="molecule type" value="Genomic_DNA"/>
</dbReference>
<dbReference type="SMR" id="A7H342"/>
<dbReference type="KEGG" id="cjd:JJD26997_0792"/>
<dbReference type="HOGENOM" id="CLU_065341_2_1_7"/>
<dbReference type="Proteomes" id="UP000002302">
    <property type="component" value="Chromosome"/>
</dbReference>
<dbReference type="GO" id="GO:0005829">
    <property type="term" value="C:cytosol"/>
    <property type="evidence" value="ECO:0007669"/>
    <property type="project" value="TreeGrafter"/>
</dbReference>
<dbReference type="GO" id="GO:0070043">
    <property type="term" value="F:rRNA (guanine-N7-)-methyltransferase activity"/>
    <property type="evidence" value="ECO:0007669"/>
    <property type="project" value="UniProtKB-UniRule"/>
</dbReference>
<dbReference type="Gene3D" id="3.40.50.150">
    <property type="entry name" value="Vaccinia Virus protein VP39"/>
    <property type="match status" value="1"/>
</dbReference>
<dbReference type="HAMAP" id="MF_00074">
    <property type="entry name" value="16SrRNA_methyltr_G"/>
    <property type="match status" value="1"/>
</dbReference>
<dbReference type="InterPro" id="IPR003682">
    <property type="entry name" value="rRNA_ssu_MeTfrase_G"/>
</dbReference>
<dbReference type="InterPro" id="IPR029063">
    <property type="entry name" value="SAM-dependent_MTases_sf"/>
</dbReference>
<dbReference type="NCBIfam" id="TIGR00138">
    <property type="entry name" value="rsmG_gidB"/>
    <property type="match status" value="1"/>
</dbReference>
<dbReference type="PANTHER" id="PTHR31760">
    <property type="entry name" value="S-ADENOSYL-L-METHIONINE-DEPENDENT METHYLTRANSFERASES SUPERFAMILY PROTEIN"/>
    <property type="match status" value="1"/>
</dbReference>
<dbReference type="PANTHER" id="PTHR31760:SF0">
    <property type="entry name" value="S-ADENOSYL-L-METHIONINE-DEPENDENT METHYLTRANSFERASES SUPERFAMILY PROTEIN"/>
    <property type="match status" value="1"/>
</dbReference>
<dbReference type="Pfam" id="PF02527">
    <property type="entry name" value="GidB"/>
    <property type="match status" value="1"/>
</dbReference>
<dbReference type="PIRSF" id="PIRSF003078">
    <property type="entry name" value="GidB"/>
    <property type="match status" value="1"/>
</dbReference>
<dbReference type="SUPFAM" id="SSF53335">
    <property type="entry name" value="S-adenosyl-L-methionine-dependent methyltransferases"/>
    <property type="match status" value="1"/>
</dbReference>
<comment type="function">
    <text evidence="1">Specifically methylates the N7 position of guanine in position 527 of 16S rRNA.</text>
</comment>
<comment type="catalytic activity">
    <reaction evidence="1">
        <text>guanosine(527) in 16S rRNA + S-adenosyl-L-methionine = N(7)-methylguanosine(527) in 16S rRNA + S-adenosyl-L-homocysteine</text>
        <dbReference type="Rhea" id="RHEA:42732"/>
        <dbReference type="Rhea" id="RHEA-COMP:10209"/>
        <dbReference type="Rhea" id="RHEA-COMP:10210"/>
        <dbReference type="ChEBI" id="CHEBI:57856"/>
        <dbReference type="ChEBI" id="CHEBI:59789"/>
        <dbReference type="ChEBI" id="CHEBI:74269"/>
        <dbReference type="ChEBI" id="CHEBI:74480"/>
        <dbReference type="EC" id="2.1.1.170"/>
    </reaction>
</comment>
<comment type="subcellular location">
    <subcellularLocation>
        <location evidence="1">Cytoplasm</location>
    </subcellularLocation>
</comment>
<comment type="similarity">
    <text evidence="1">Belongs to the methyltransferase superfamily. RNA methyltransferase RsmG family.</text>
</comment>
<accession>A7H342</accession>